<feature type="chain" id="PRO_0000087540" description="Golgin-45">
    <location>
        <begin position="1"/>
        <end position="403"/>
    </location>
</feature>
<feature type="region of interest" description="Disordered" evidence="3">
    <location>
        <begin position="1"/>
        <end position="63"/>
    </location>
</feature>
<feature type="region of interest" description="Essential for interaction with GORASP2" evidence="5">
    <location>
        <begin position="397"/>
        <end position="403"/>
    </location>
</feature>
<feature type="coiled-coil region" evidence="2">
    <location>
        <begin position="123"/>
        <end position="216"/>
    </location>
</feature>
<feature type="short sequence motif" description="Tankyrase-binding motif" evidence="1">
    <location>
        <begin position="22"/>
        <end position="26"/>
    </location>
</feature>
<feature type="modified residue" description="Phosphoserine" evidence="1">
    <location>
        <position position="53"/>
    </location>
</feature>
<feature type="modified residue" description="Phosphoserine" evidence="1">
    <location>
        <position position="356"/>
    </location>
</feature>
<feature type="splice variant" id="VSP_011188" description="In isoform 2." evidence="6">
    <original>G</original>
    <variation>GKQEMMKG</variation>
    <location>
        <position position="14"/>
    </location>
</feature>
<feature type="mutagenesis site" description="Reduced interaction with GORASP2; when associated with A-396." evidence="5">
    <original>C</original>
    <variation>A</variation>
    <location>
        <position position="393"/>
    </location>
</feature>
<feature type="mutagenesis site" description="Reduced interaction with GORASP2; when associated with A-393." evidence="5">
    <original>C</original>
    <variation>A</variation>
    <location>
        <position position="396"/>
    </location>
</feature>
<feature type="mutagenesis site" description="Reduced interaction with GORASP2." evidence="5">
    <original>L</original>
    <variation>R</variation>
    <location>
        <position position="403"/>
    </location>
</feature>
<feature type="sequence conflict" description="In Ref. 2; AAH27025." evidence="7" ref="2">
    <original>S</original>
    <variation>R</variation>
    <location>
        <position position="320"/>
    </location>
</feature>
<feature type="sequence conflict" description="In Ref. 2; AAH27025." evidence="7" ref="2">
    <original>I</original>
    <variation>N</variation>
    <location>
        <position position="346"/>
    </location>
</feature>
<organism>
    <name type="scientific">Mus musculus</name>
    <name type="common">Mouse</name>
    <dbReference type="NCBI Taxonomy" id="10090"/>
    <lineage>
        <taxon>Eukaryota</taxon>
        <taxon>Metazoa</taxon>
        <taxon>Chordata</taxon>
        <taxon>Craniata</taxon>
        <taxon>Vertebrata</taxon>
        <taxon>Euteleostomi</taxon>
        <taxon>Mammalia</taxon>
        <taxon>Eutheria</taxon>
        <taxon>Euarchontoglires</taxon>
        <taxon>Glires</taxon>
        <taxon>Rodentia</taxon>
        <taxon>Myomorpha</taxon>
        <taxon>Muroidea</taxon>
        <taxon>Muridae</taxon>
        <taxon>Murinae</taxon>
        <taxon>Mus</taxon>
        <taxon>Mus</taxon>
    </lineage>
</organism>
<reference key="1">
    <citation type="journal article" date="2005" name="Science">
        <title>The transcriptional landscape of the mammalian genome.</title>
        <authorList>
            <person name="Carninci P."/>
            <person name="Kasukawa T."/>
            <person name="Katayama S."/>
            <person name="Gough J."/>
            <person name="Frith M.C."/>
            <person name="Maeda N."/>
            <person name="Oyama R."/>
            <person name="Ravasi T."/>
            <person name="Lenhard B."/>
            <person name="Wells C."/>
            <person name="Kodzius R."/>
            <person name="Shimokawa K."/>
            <person name="Bajic V.B."/>
            <person name="Brenner S.E."/>
            <person name="Batalov S."/>
            <person name="Forrest A.R."/>
            <person name="Zavolan M."/>
            <person name="Davis M.J."/>
            <person name="Wilming L.G."/>
            <person name="Aidinis V."/>
            <person name="Allen J.E."/>
            <person name="Ambesi-Impiombato A."/>
            <person name="Apweiler R."/>
            <person name="Aturaliya R.N."/>
            <person name="Bailey T.L."/>
            <person name="Bansal M."/>
            <person name="Baxter L."/>
            <person name="Beisel K.W."/>
            <person name="Bersano T."/>
            <person name="Bono H."/>
            <person name="Chalk A.M."/>
            <person name="Chiu K.P."/>
            <person name="Choudhary V."/>
            <person name="Christoffels A."/>
            <person name="Clutterbuck D.R."/>
            <person name="Crowe M.L."/>
            <person name="Dalla E."/>
            <person name="Dalrymple B.P."/>
            <person name="de Bono B."/>
            <person name="Della Gatta G."/>
            <person name="di Bernardo D."/>
            <person name="Down T."/>
            <person name="Engstrom P."/>
            <person name="Fagiolini M."/>
            <person name="Faulkner G."/>
            <person name="Fletcher C.F."/>
            <person name="Fukushima T."/>
            <person name="Furuno M."/>
            <person name="Futaki S."/>
            <person name="Gariboldi M."/>
            <person name="Georgii-Hemming P."/>
            <person name="Gingeras T.R."/>
            <person name="Gojobori T."/>
            <person name="Green R.E."/>
            <person name="Gustincich S."/>
            <person name="Harbers M."/>
            <person name="Hayashi Y."/>
            <person name="Hensch T.K."/>
            <person name="Hirokawa N."/>
            <person name="Hill D."/>
            <person name="Huminiecki L."/>
            <person name="Iacono M."/>
            <person name="Ikeo K."/>
            <person name="Iwama A."/>
            <person name="Ishikawa T."/>
            <person name="Jakt M."/>
            <person name="Kanapin A."/>
            <person name="Katoh M."/>
            <person name="Kawasawa Y."/>
            <person name="Kelso J."/>
            <person name="Kitamura H."/>
            <person name="Kitano H."/>
            <person name="Kollias G."/>
            <person name="Krishnan S.P."/>
            <person name="Kruger A."/>
            <person name="Kummerfeld S.K."/>
            <person name="Kurochkin I.V."/>
            <person name="Lareau L.F."/>
            <person name="Lazarevic D."/>
            <person name="Lipovich L."/>
            <person name="Liu J."/>
            <person name="Liuni S."/>
            <person name="McWilliam S."/>
            <person name="Madan Babu M."/>
            <person name="Madera M."/>
            <person name="Marchionni L."/>
            <person name="Matsuda H."/>
            <person name="Matsuzawa S."/>
            <person name="Miki H."/>
            <person name="Mignone F."/>
            <person name="Miyake S."/>
            <person name="Morris K."/>
            <person name="Mottagui-Tabar S."/>
            <person name="Mulder N."/>
            <person name="Nakano N."/>
            <person name="Nakauchi H."/>
            <person name="Ng P."/>
            <person name="Nilsson R."/>
            <person name="Nishiguchi S."/>
            <person name="Nishikawa S."/>
            <person name="Nori F."/>
            <person name="Ohara O."/>
            <person name="Okazaki Y."/>
            <person name="Orlando V."/>
            <person name="Pang K.C."/>
            <person name="Pavan W.J."/>
            <person name="Pavesi G."/>
            <person name="Pesole G."/>
            <person name="Petrovsky N."/>
            <person name="Piazza S."/>
            <person name="Reed J."/>
            <person name="Reid J.F."/>
            <person name="Ring B.Z."/>
            <person name="Ringwald M."/>
            <person name="Rost B."/>
            <person name="Ruan Y."/>
            <person name="Salzberg S.L."/>
            <person name="Sandelin A."/>
            <person name="Schneider C."/>
            <person name="Schoenbach C."/>
            <person name="Sekiguchi K."/>
            <person name="Semple C.A."/>
            <person name="Seno S."/>
            <person name="Sessa L."/>
            <person name="Sheng Y."/>
            <person name="Shibata Y."/>
            <person name="Shimada H."/>
            <person name="Shimada K."/>
            <person name="Silva D."/>
            <person name="Sinclair B."/>
            <person name="Sperling S."/>
            <person name="Stupka E."/>
            <person name="Sugiura K."/>
            <person name="Sultana R."/>
            <person name="Takenaka Y."/>
            <person name="Taki K."/>
            <person name="Tammoja K."/>
            <person name="Tan S.L."/>
            <person name="Tang S."/>
            <person name="Taylor M.S."/>
            <person name="Tegner J."/>
            <person name="Teichmann S.A."/>
            <person name="Ueda H.R."/>
            <person name="van Nimwegen E."/>
            <person name="Verardo R."/>
            <person name="Wei C.L."/>
            <person name="Yagi K."/>
            <person name="Yamanishi H."/>
            <person name="Zabarovsky E."/>
            <person name="Zhu S."/>
            <person name="Zimmer A."/>
            <person name="Hide W."/>
            <person name="Bult C."/>
            <person name="Grimmond S.M."/>
            <person name="Teasdale R.D."/>
            <person name="Liu E.T."/>
            <person name="Brusic V."/>
            <person name="Quackenbush J."/>
            <person name="Wahlestedt C."/>
            <person name="Mattick J.S."/>
            <person name="Hume D.A."/>
            <person name="Kai C."/>
            <person name="Sasaki D."/>
            <person name="Tomaru Y."/>
            <person name="Fukuda S."/>
            <person name="Kanamori-Katayama M."/>
            <person name="Suzuki M."/>
            <person name="Aoki J."/>
            <person name="Arakawa T."/>
            <person name="Iida J."/>
            <person name="Imamura K."/>
            <person name="Itoh M."/>
            <person name="Kato T."/>
            <person name="Kawaji H."/>
            <person name="Kawagashira N."/>
            <person name="Kawashima T."/>
            <person name="Kojima M."/>
            <person name="Kondo S."/>
            <person name="Konno H."/>
            <person name="Nakano K."/>
            <person name="Ninomiya N."/>
            <person name="Nishio T."/>
            <person name="Okada M."/>
            <person name="Plessy C."/>
            <person name="Shibata K."/>
            <person name="Shiraki T."/>
            <person name="Suzuki S."/>
            <person name="Tagami M."/>
            <person name="Waki K."/>
            <person name="Watahiki A."/>
            <person name="Okamura-Oho Y."/>
            <person name="Suzuki H."/>
            <person name="Kawai J."/>
            <person name="Hayashizaki Y."/>
        </authorList>
    </citation>
    <scope>NUCLEOTIDE SEQUENCE [LARGE SCALE MRNA] (ISOFORMS 1 AND 2)</scope>
    <source>
        <strain>C57BL/6J</strain>
        <tissue>Placenta</tissue>
        <tissue>Testis</tissue>
    </source>
</reference>
<reference key="2">
    <citation type="journal article" date="2004" name="Genome Res.">
        <title>The status, quality, and expansion of the NIH full-length cDNA project: the Mammalian Gene Collection (MGC).</title>
        <authorList>
            <consortium name="The MGC Project Team"/>
        </authorList>
    </citation>
    <scope>NUCLEOTIDE SEQUENCE [LARGE SCALE MRNA] (ISOFORM 1)</scope>
    <source>
        <strain>FVB/N-3</strain>
        <tissue>Mammary tumor</tissue>
    </source>
</reference>
<reference key="3">
    <citation type="journal article" date="2001" name="J. Cell Biol.">
        <title>A GRASP55-rab2 effector complex linking Golgi structure to membrane traffic.</title>
        <authorList>
            <person name="Short B."/>
            <person name="Preisinger C."/>
            <person name="Koerner R."/>
            <person name="Kopajtich R."/>
            <person name="Byron O."/>
            <person name="Barr F.A."/>
        </authorList>
    </citation>
    <scope>INTERACTION WITH GORASP2 AND RAB2</scope>
</reference>
<reference evidence="8" key="4">
    <citation type="journal article" date="2017" name="J. Biol. Chem.">
        <title>Structural Basis for the Interaction between Golgi Reassembly-stacking Protein GRASP55 and Golgin45.</title>
        <authorList>
            <person name="Zhao J."/>
            <person name="Li B."/>
            <person name="Huang X."/>
            <person name="Morelli X."/>
            <person name="Shi N."/>
        </authorList>
    </citation>
    <scope>X-RAY CRYSTALLOGRAPHY (1.33 ANGSTROMS) OF 379-403 IN COMPLEX WITH GORASP2</scope>
    <scope>REGION</scope>
    <scope>MUTAGENESIS OF CYS-393; CYS-396 AND LEU-403</scope>
</reference>
<sequence length="403" mass="45541">MEKMTTLKSSENKGILTSTPIRGAGDGMETEEPPKSVEVTHGVQPINQHVLPSPRKKVSSDSPGVLQLGKILNERTVEVEAVRIFVPKAAITHDIPTKNTKVKSLGHHREELHNQAEVVTDPRKELSEVKKVLEKLKNSERRLLQDKEGLSNQLRVQTEINRELKKLLVASVGDDPQYHFERLAREKNQLILENEALGRNTAQLSEQLERMSIQCDVWRSKFLASRVMADELTNFRVVLQRQNRDAQSAIQDLLSEREQFRQEMTSTQKFLEELLVSLQWGREQTYSPNTQPHSTADLALTNHGLAQAIHAHLLGNVGISHQKKIPTTVEFCSTPAEKMAEKVLRILDPVACTESSPDNQFAESSPTTLLTTKKNIGRFHPYTRYENITFNCCNHCQGELIAL</sequence>
<comment type="function">
    <text evidence="1">Required for normal Golgi structure and for protein transport from the endoplasmic reticulum (ER) through the Golgi apparatus to the cell surface.</text>
</comment>
<comment type="subunit">
    <text evidence="4 5">Interacts with GORASP2 (PubMed:11739401, PubMed:28049725). Interacts with the GTP-bound form of RAB2, but not with other Golgi Rab proteins (PubMed:11739401). Identified in a complex with RAB2 and GORASP2 (PubMed:11739401).</text>
</comment>
<comment type="subcellular location">
    <subcellularLocation>
        <location evidence="1">Golgi apparatus membrane</location>
    </subcellularLocation>
</comment>
<comment type="alternative products">
    <event type="alternative splicing"/>
    <isoform>
        <id>Q8R2X8-1</id>
        <name>1</name>
        <sequence type="displayed"/>
    </isoform>
    <isoform>
        <id>Q8R2X8-2</id>
        <name>2</name>
        <sequence type="described" ref="VSP_011188"/>
    </isoform>
</comment>
<comment type="domain">
    <text evidence="1">The tankyrase-binding motif (also named TBD) is required for interaction with tankyrase TNKS and TNKS2.</text>
</comment>
<comment type="PTM">
    <text evidence="1">ADP-ribosylated by tankyrase TNKS and TNKS2. Poly-ADP-ribosylated protein is recognized by RNF146, followed by ubiquitination.</text>
</comment>
<comment type="PTM">
    <text evidence="1">Ubiquitinated by RNF146 when poly-ADP-ribosylated, leading to its degradation.</text>
</comment>
<comment type="caution">
    <text evidence="7">Was initially thought to be a potential transcription factor, localized in the nucleus.</text>
</comment>
<dbReference type="EMBL" id="AK005489">
    <property type="protein sequence ID" value="BAB24074.1"/>
    <property type="molecule type" value="mRNA"/>
</dbReference>
<dbReference type="EMBL" id="AK029787">
    <property type="protein sequence ID" value="BAC26617.1"/>
    <property type="molecule type" value="mRNA"/>
</dbReference>
<dbReference type="EMBL" id="AK167493">
    <property type="protein sequence ID" value="BAE39571.1"/>
    <property type="molecule type" value="mRNA"/>
</dbReference>
<dbReference type="EMBL" id="BC027025">
    <property type="protein sequence ID" value="AAH27025.1"/>
    <property type="molecule type" value="mRNA"/>
</dbReference>
<dbReference type="CCDS" id="CCDS15435.1">
    <molecule id="Q8R2X8-2"/>
</dbReference>
<dbReference type="CCDS" id="CCDS48423.1">
    <molecule id="Q8R2X8-1"/>
</dbReference>
<dbReference type="RefSeq" id="NP_001153680.1">
    <molecule id="Q8R2X8-1"/>
    <property type="nucleotide sequence ID" value="NM_001160208.1"/>
</dbReference>
<dbReference type="RefSeq" id="NP_001153681.1">
    <molecule id="Q8R2X8-1"/>
    <property type="nucleotide sequence ID" value="NM_001160209.1"/>
</dbReference>
<dbReference type="RefSeq" id="NP_079781.2">
    <molecule id="Q8R2X8-2"/>
    <property type="nucleotide sequence ID" value="NM_025505.4"/>
</dbReference>
<dbReference type="PDB" id="5H3J">
    <property type="method" value="X-ray"/>
    <property type="resolution" value="1.33 A"/>
    <property type="chains" value="B=379-403"/>
</dbReference>
<dbReference type="PDBsum" id="5H3J"/>
<dbReference type="SMR" id="Q8R2X8"/>
<dbReference type="BioGRID" id="211404">
    <property type="interactions" value="8"/>
</dbReference>
<dbReference type="FunCoup" id="Q8R2X8">
    <property type="interactions" value="3636"/>
</dbReference>
<dbReference type="IntAct" id="Q8R2X8">
    <property type="interactions" value="8"/>
</dbReference>
<dbReference type="STRING" id="10090.ENSMUSP00000027866"/>
<dbReference type="iPTMnet" id="Q8R2X8"/>
<dbReference type="PhosphoSitePlus" id="Q8R2X8"/>
<dbReference type="jPOST" id="Q8R2X8"/>
<dbReference type="PaxDb" id="10090-ENSMUSP00000027866"/>
<dbReference type="ProteomicsDB" id="271243">
    <molecule id="Q8R2X8-1"/>
</dbReference>
<dbReference type="ProteomicsDB" id="271244">
    <molecule id="Q8R2X8-2"/>
</dbReference>
<dbReference type="Pumba" id="Q8R2X8"/>
<dbReference type="Antibodypedia" id="20542">
    <property type="antibodies" value="312 antibodies from 29 providers"/>
</dbReference>
<dbReference type="DNASU" id="66352"/>
<dbReference type="Ensembl" id="ENSMUST00000027866.11">
    <molecule id="Q8R2X8-2"/>
    <property type="protein sequence ID" value="ENSMUSP00000027866.5"/>
    <property type="gene ID" value="ENSMUSG00000026577.14"/>
</dbReference>
<dbReference type="Ensembl" id="ENSMUST00000086032.4">
    <molecule id="Q8R2X8-1"/>
    <property type="protein sequence ID" value="ENSMUSP00000083196.4"/>
    <property type="gene ID" value="ENSMUSG00000026577.14"/>
</dbReference>
<dbReference type="Ensembl" id="ENSMUST00000120447.8">
    <molecule id="Q8R2X8-1"/>
    <property type="protein sequence ID" value="ENSMUSP00000113479.2"/>
    <property type="gene ID" value="ENSMUSG00000026577.14"/>
</dbReference>
<dbReference type="GeneID" id="66352"/>
<dbReference type="KEGG" id="mmu:66352"/>
<dbReference type="UCSC" id="uc007dig.1">
    <molecule id="Q8R2X8-2"/>
    <property type="organism name" value="mouse"/>
</dbReference>
<dbReference type="UCSC" id="uc007dih.1">
    <molecule id="Q8R2X8-1"/>
    <property type="organism name" value="mouse"/>
</dbReference>
<dbReference type="AGR" id="MGI:1201607"/>
<dbReference type="CTD" id="8548"/>
<dbReference type="MGI" id="MGI:1201607">
    <property type="gene designation" value="Blzf1"/>
</dbReference>
<dbReference type="VEuPathDB" id="HostDB:ENSMUSG00000026577"/>
<dbReference type="eggNOG" id="KOG4074">
    <property type="taxonomic scope" value="Eukaryota"/>
</dbReference>
<dbReference type="GeneTree" id="ENSGT00390000009400"/>
<dbReference type="HOGENOM" id="CLU_057527_0_0_1"/>
<dbReference type="InParanoid" id="Q8R2X8"/>
<dbReference type="OMA" id="MIDTHKL"/>
<dbReference type="OrthoDB" id="41856at9989"/>
<dbReference type="PhylomeDB" id="Q8R2X8"/>
<dbReference type="TreeFam" id="TF317238"/>
<dbReference type="Reactome" id="R-MMU-162658">
    <property type="pathway name" value="Golgi Cisternae Pericentriolar Stack Reorganization"/>
</dbReference>
<dbReference type="BioGRID-ORCS" id="66352">
    <property type="hits" value="4 hits in 78 CRISPR screens"/>
</dbReference>
<dbReference type="ChiTaRS" id="Blzf1">
    <property type="organism name" value="mouse"/>
</dbReference>
<dbReference type="PRO" id="PR:Q8R2X8"/>
<dbReference type="Proteomes" id="UP000000589">
    <property type="component" value="Chromosome 1"/>
</dbReference>
<dbReference type="RNAct" id="Q8R2X8">
    <property type="molecule type" value="protein"/>
</dbReference>
<dbReference type="Bgee" id="ENSMUSG00000026577">
    <property type="expression patterns" value="Expressed in lumbar dorsal root ganglion and 264 other cell types or tissues"/>
</dbReference>
<dbReference type="GO" id="GO:0005794">
    <property type="term" value="C:Golgi apparatus"/>
    <property type="evidence" value="ECO:0000314"/>
    <property type="project" value="MGI"/>
</dbReference>
<dbReference type="GO" id="GO:0000139">
    <property type="term" value="C:Golgi membrane"/>
    <property type="evidence" value="ECO:0007669"/>
    <property type="project" value="UniProtKB-SubCell"/>
</dbReference>
<dbReference type="GO" id="GO:0005634">
    <property type="term" value="C:nucleus"/>
    <property type="evidence" value="ECO:0000266"/>
    <property type="project" value="MGI"/>
</dbReference>
<dbReference type="GO" id="GO:0031625">
    <property type="term" value="F:ubiquitin protein ligase binding"/>
    <property type="evidence" value="ECO:0007669"/>
    <property type="project" value="Ensembl"/>
</dbReference>
<dbReference type="GO" id="GO:0007030">
    <property type="term" value="P:Golgi organization"/>
    <property type="evidence" value="ECO:0000266"/>
    <property type="project" value="MGI"/>
</dbReference>
<dbReference type="GO" id="GO:0043001">
    <property type="term" value="P:Golgi to plasma membrane protein transport"/>
    <property type="evidence" value="ECO:0000266"/>
    <property type="project" value="MGI"/>
</dbReference>
<dbReference type="InterPro" id="IPR027095">
    <property type="entry name" value="Golgin-45"/>
</dbReference>
<dbReference type="InterPro" id="IPR013183">
    <property type="entry name" value="Hsk3-like"/>
</dbReference>
<dbReference type="PANTHER" id="PTHR13066">
    <property type="entry name" value="BASIC LEUCINE ZIPPER NUCLEAR FACTOR 1 BLZF1 PROTEIN"/>
    <property type="match status" value="1"/>
</dbReference>
<dbReference type="PANTHER" id="PTHR13066:SF2">
    <property type="entry name" value="GOLGIN-45"/>
    <property type="match status" value="1"/>
</dbReference>
<dbReference type="Pfam" id="PF08227">
    <property type="entry name" value="DASH_Hsk3"/>
    <property type="match status" value="1"/>
</dbReference>
<evidence type="ECO:0000250" key="1">
    <source>
        <dbReference type="UniProtKB" id="Q9H2G9"/>
    </source>
</evidence>
<evidence type="ECO:0000255" key="2"/>
<evidence type="ECO:0000256" key="3">
    <source>
        <dbReference type="SAM" id="MobiDB-lite"/>
    </source>
</evidence>
<evidence type="ECO:0000269" key="4">
    <source>
    </source>
</evidence>
<evidence type="ECO:0000269" key="5">
    <source>
    </source>
</evidence>
<evidence type="ECO:0000303" key="6">
    <source>
    </source>
</evidence>
<evidence type="ECO:0000305" key="7"/>
<evidence type="ECO:0007744" key="8">
    <source>
        <dbReference type="PDB" id="5H3J"/>
    </source>
</evidence>
<protein>
    <recommendedName>
        <fullName>Golgin-45</fullName>
    </recommendedName>
    <alternativeName>
        <fullName>Basic leucine zipper nuclear factor 1</fullName>
    </alternativeName>
</protein>
<keyword id="KW-0002">3D-structure</keyword>
<keyword id="KW-0013">ADP-ribosylation</keyword>
<keyword id="KW-0025">Alternative splicing</keyword>
<keyword id="KW-0175">Coiled coil</keyword>
<keyword id="KW-0931">ER-Golgi transport</keyword>
<keyword id="KW-0333">Golgi apparatus</keyword>
<keyword id="KW-0472">Membrane</keyword>
<keyword id="KW-0597">Phosphoprotein</keyword>
<keyword id="KW-0653">Protein transport</keyword>
<keyword id="KW-1185">Reference proteome</keyword>
<keyword id="KW-0813">Transport</keyword>
<keyword id="KW-0832">Ubl conjugation</keyword>
<proteinExistence type="evidence at protein level"/>
<accession>Q8R2X8</accession>
<accession>Q3TJC4</accession>
<accession>Q8C0U6</accession>
<accession>Q9DAV7</accession>
<name>GO45_MOUSE</name>
<gene>
    <name type="primary">Blzf1</name>
</gene>